<keyword id="KW-0025">Alternative splicing</keyword>
<keyword id="KW-0966">Cell projection</keyword>
<keyword id="KW-0969">Cilium</keyword>
<keyword id="KW-0175">Coiled coil</keyword>
<keyword id="KW-0963">Cytoplasm</keyword>
<keyword id="KW-0206">Cytoskeleton</keyword>
<keyword id="KW-0597">Phosphoprotein</keyword>
<keyword id="KW-0653">Protein transport</keyword>
<keyword id="KW-1185">Reference proteome</keyword>
<keyword id="KW-0813">Transport</keyword>
<proteinExistence type="evidence at protein level"/>
<gene>
    <name type="primary">Lca5</name>
</gene>
<sequence length="704" mass="80162">MGERARSPDIEQGKKGGKHPYSHYSSDLGSSPQSSGPSSPVNTTPCASTREKNPKRHLSDNQVHHPTVRKVSPKAVPSKKGIRVGFRSQSLNREPLRKDPDIVTKRVLSARLLKINELQNEVSELQVKLAQLLKENKALKSLQYRQEKALNKFEDAENEISQLIHRHNNEITALKERLRKSQEKERATEKRVKETEGELFRTKFSLQKLKKISEARHLPERDDLAKKLVSAELKLDDTERKIKELSKNLELSTNSFQRQLLAERKRAFEAYDENKVLQKELQRLHHKLKEKEKELDIKNIYANRLPKSSPKKEKEIERKHVSCQSDFTDQCTKGVQTAEDFELEDFPFTAQTVLCYENRWDEPEYLSSYLEYQDLNKHGSEMLSSVLGQEGKYDEDEDPCSAKQEARKPESEWAREELDKVKGKSALLGRAEKLALEAGRFPTENYQAQSVDKFEDEAERLKTEMLLAKLNEINKELQDPQNLGRAPLPLLPNFESKLHSPDRSTRPYSFPESLDRSFNGQHLQDLSFLTPRGEGGSPGPIRSPGQIRSPAPLDEFSFGSYVPSFGKTLGKSNPPSQKSSLLDFQSNSSESPSKDSLDLMSRKEKKATLMEQLFGPSASNTSVSSKSTDPHFPAASRGDMDPLHFLSGDRNSRVREPGDEEEDLFLREGRSFNPNRHRLKHASNKPTVTAVDSVDEDIEEVTLR</sequence>
<dbReference type="EMBL" id="AK015260">
    <property type="protein sequence ID" value="BAB29769.1"/>
    <property type="molecule type" value="mRNA"/>
</dbReference>
<dbReference type="EMBL" id="AK017509">
    <property type="protein sequence ID" value="BAB30781.1"/>
    <property type="status" value="ALT_INIT"/>
    <property type="molecule type" value="mRNA"/>
</dbReference>
<dbReference type="EMBL" id="BC049101">
    <property type="protein sequence ID" value="AAH49101.1"/>
    <property type="molecule type" value="mRNA"/>
</dbReference>
<dbReference type="EMBL" id="BC052060">
    <property type="protein sequence ID" value="AAH52060.1"/>
    <property type="molecule type" value="mRNA"/>
</dbReference>
<dbReference type="CCDS" id="CCDS23373.1">
    <molecule id="Q80ST9-2"/>
</dbReference>
<dbReference type="CCDS" id="CCDS23374.1">
    <molecule id="Q80ST9-1"/>
</dbReference>
<dbReference type="RefSeq" id="NP_081724.1">
    <property type="nucleotide sequence ID" value="NM_027448.2"/>
</dbReference>
<dbReference type="RefSeq" id="NP_083710.2">
    <property type="nucleotide sequence ID" value="NM_029434.3"/>
</dbReference>
<dbReference type="SMR" id="Q80ST9"/>
<dbReference type="FunCoup" id="Q80ST9">
    <property type="interactions" value="284"/>
</dbReference>
<dbReference type="STRING" id="10090.ENSMUSP00000034791"/>
<dbReference type="iPTMnet" id="Q80ST9"/>
<dbReference type="PhosphoSitePlus" id="Q80ST9"/>
<dbReference type="jPOST" id="Q80ST9"/>
<dbReference type="PaxDb" id="10090-ENSMUSP00000034791"/>
<dbReference type="ProteomicsDB" id="292237">
    <molecule id="Q80ST9-1"/>
</dbReference>
<dbReference type="ProteomicsDB" id="292238">
    <molecule id="Q80ST9-2"/>
</dbReference>
<dbReference type="DNASU" id="75782"/>
<dbReference type="GeneID" id="75782"/>
<dbReference type="KEGG" id="mmu:75782"/>
<dbReference type="AGR" id="MGI:1923032"/>
<dbReference type="CTD" id="167691"/>
<dbReference type="MGI" id="MGI:1923032">
    <property type="gene designation" value="Lca5"/>
</dbReference>
<dbReference type="eggNOG" id="ENOG502QQG3">
    <property type="taxonomic scope" value="Eukaryota"/>
</dbReference>
<dbReference type="InParanoid" id="Q80ST9"/>
<dbReference type="OrthoDB" id="2123794at2759"/>
<dbReference type="PhylomeDB" id="Q80ST9"/>
<dbReference type="BioGRID-ORCS" id="75782">
    <property type="hits" value="1 hit in 77 CRISPR screens"/>
</dbReference>
<dbReference type="ChiTaRS" id="Lca5">
    <property type="organism name" value="mouse"/>
</dbReference>
<dbReference type="PRO" id="PR:Q80ST9"/>
<dbReference type="Proteomes" id="UP000000589">
    <property type="component" value="Unplaced"/>
</dbReference>
<dbReference type="RNAct" id="Q80ST9">
    <property type="molecule type" value="protein"/>
</dbReference>
<dbReference type="GO" id="GO:0005930">
    <property type="term" value="C:axoneme"/>
    <property type="evidence" value="ECO:0000314"/>
    <property type="project" value="MGI"/>
</dbReference>
<dbReference type="GO" id="GO:0036064">
    <property type="term" value="C:ciliary basal body"/>
    <property type="evidence" value="ECO:0000314"/>
    <property type="project" value="MGI"/>
</dbReference>
<dbReference type="GO" id="GO:0005929">
    <property type="term" value="C:cilium"/>
    <property type="evidence" value="ECO:0000314"/>
    <property type="project" value="MGI"/>
</dbReference>
<dbReference type="GO" id="GO:0043005">
    <property type="term" value="C:neuron projection"/>
    <property type="evidence" value="ECO:0000314"/>
    <property type="project" value="MGI"/>
</dbReference>
<dbReference type="GO" id="GO:0032391">
    <property type="term" value="C:photoreceptor connecting cilium"/>
    <property type="evidence" value="ECO:0000314"/>
    <property type="project" value="UniProtKB"/>
</dbReference>
<dbReference type="GO" id="GO:0044877">
    <property type="term" value="F:protein-containing complex binding"/>
    <property type="evidence" value="ECO:0000266"/>
    <property type="project" value="MGI"/>
</dbReference>
<dbReference type="GO" id="GO:0042073">
    <property type="term" value="P:intraciliary transport"/>
    <property type="evidence" value="ECO:0000315"/>
    <property type="project" value="MGI"/>
</dbReference>
<dbReference type="GO" id="GO:0045494">
    <property type="term" value="P:photoreceptor cell maintenance"/>
    <property type="evidence" value="ECO:0000315"/>
    <property type="project" value="MGI"/>
</dbReference>
<dbReference type="GO" id="GO:0015031">
    <property type="term" value="P:protein transport"/>
    <property type="evidence" value="ECO:0007669"/>
    <property type="project" value="UniProtKB-KW"/>
</dbReference>
<dbReference type="InterPro" id="IPR026188">
    <property type="entry name" value="Lebercilin-like"/>
</dbReference>
<dbReference type="InterPro" id="IPR028933">
    <property type="entry name" value="Lebercilin_dom"/>
</dbReference>
<dbReference type="PANTHER" id="PTHR16650">
    <property type="entry name" value="C21ORF13-RELATED"/>
    <property type="match status" value="1"/>
</dbReference>
<dbReference type="PANTHER" id="PTHR16650:SF10">
    <property type="entry name" value="LEBERCILIN"/>
    <property type="match status" value="1"/>
</dbReference>
<dbReference type="Pfam" id="PF15619">
    <property type="entry name" value="Lebercilin"/>
    <property type="match status" value="1"/>
</dbReference>
<comment type="function">
    <text evidence="6">Involved in intraflagellar protein (IFT) transport in photoreceptor cilia.</text>
</comment>
<comment type="subunit">
    <text evidence="2">Interacts with NINL. Interacts with OFD1. Interacts with FAM161A. Interacts with components of the IFT complex B.</text>
</comment>
<comment type="subcellular location">
    <subcellularLocation>
        <location evidence="1">Cytoplasm</location>
        <location evidence="1">Cytoskeleton</location>
    </subcellularLocation>
    <subcellularLocation>
        <location evidence="5">Cytoplasm</location>
        <location evidence="5">Cytoskeleton</location>
        <location evidence="5">Cilium axoneme</location>
    </subcellularLocation>
    <subcellularLocation>
        <location evidence="5">Cytoplasm</location>
        <location evidence="5">Cytoskeleton</location>
        <location evidence="5">Cilium basal body</location>
    </subcellularLocation>
    <subcellularLocation>
        <location evidence="6">Cell projection</location>
        <location evidence="6">Cilium</location>
    </subcellularLocation>
    <text evidence="5 6">Localized to the region between the outer and inner photoreceptor segments, corresponding to the photoreceptor connecting cilium (PubMed:17546029, PubMed:21606596). Colocalizes with IFT complex A and B proteins in the connecting cilium of photoreceptors (PubMed:21606596).</text>
</comment>
<comment type="alternative products">
    <event type="alternative splicing"/>
    <isoform>
        <id>Q80ST9-1</id>
        <name>1</name>
        <sequence type="displayed"/>
    </isoform>
    <isoform>
        <id>Q80ST9-2</id>
        <name>2</name>
        <sequence type="described" ref="VSP_014944 VSP_014945"/>
    </isoform>
</comment>
<comment type="tissue specificity">
    <text evidence="5">Detected in several tissues.</text>
</comment>
<comment type="developmental stage">
    <text evidence="5">Almost ubiquitous, low-level staining at 12.5 dpc. At later stages (14.5 dpc, 16.5 dpc and 18.5 dpc), staining of the eye, inner ear, kidney, regions of the central and peripheral neural system, the gut and the ciliated epithelium of the nasopharynx, trachea and lungs is more pronounced. Expression in the mouse eye shifted during development from the ganglion cell layer to the photoreceptors. In adult eyes (P90), expression is limited to the photoreceptor cell layer.</text>
</comment>
<comment type="disruption phenotype">
    <text evidence="6">Deficient mice exhibit retinal patches of depigmentation, lack rod and cone ERG responses to light stimuli, and show loss of ciliary intraflagellar transport function in photoreceptors leading to failure of outer segment formation and photoreceptor degeneration.</text>
</comment>
<comment type="similarity">
    <text evidence="8">Belongs to the LCA5 family.</text>
</comment>
<comment type="sequence caution" evidence="8">
    <conflict type="erroneous initiation">
        <sequence resource="EMBL-CDS" id="BAB30781"/>
    </conflict>
</comment>
<feature type="chain" id="PRO_0000089547" description="Lebercilin">
    <location>
        <begin position="1"/>
        <end position="704"/>
    </location>
</feature>
<feature type="region of interest" description="Disordered" evidence="4">
    <location>
        <begin position="1"/>
        <end position="80"/>
    </location>
</feature>
<feature type="region of interest" description="Disordered" evidence="4">
    <location>
        <begin position="389"/>
        <end position="417"/>
    </location>
</feature>
<feature type="region of interest" description="Disordered" evidence="4">
    <location>
        <begin position="476"/>
        <end position="661"/>
    </location>
</feature>
<feature type="coiled-coil region" evidence="3">
    <location>
        <begin position="105"/>
        <end position="300"/>
    </location>
</feature>
<feature type="coiled-coil region" evidence="3">
    <location>
        <begin position="448"/>
        <end position="479"/>
    </location>
</feature>
<feature type="compositionally biased region" description="Basic and acidic residues" evidence="4">
    <location>
        <begin position="1"/>
        <end position="14"/>
    </location>
</feature>
<feature type="compositionally biased region" description="Low complexity" evidence="4">
    <location>
        <begin position="25"/>
        <end position="40"/>
    </location>
</feature>
<feature type="compositionally biased region" description="Basic and acidic residues" evidence="4">
    <location>
        <begin position="49"/>
        <end position="63"/>
    </location>
</feature>
<feature type="compositionally biased region" description="Basic and acidic residues" evidence="4">
    <location>
        <begin position="404"/>
        <end position="417"/>
    </location>
</feature>
<feature type="compositionally biased region" description="Basic and acidic residues" evidence="4">
    <location>
        <begin position="496"/>
        <end position="505"/>
    </location>
</feature>
<feature type="compositionally biased region" description="Polar residues" evidence="4">
    <location>
        <begin position="570"/>
        <end position="591"/>
    </location>
</feature>
<feature type="compositionally biased region" description="Basic and acidic residues" evidence="4">
    <location>
        <begin position="592"/>
        <end position="608"/>
    </location>
</feature>
<feature type="compositionally biased region" description="Low complexity" evidence="4">
    <location>
        <begin position="617"/>
        <end position="627"/>
    </location>
</feature>
<feature type="modified residue" description="Phosphoserine" evidence="9">
    <location>
        <position position="7"/>
    </location>
</feature>
<feature type="modified residue" description="Phosphoserine" evidence="2">
    <location>
        <position position="48"/>
    </location>
</feature>
<feature type="splice variant" id="VSP_014944" description="In isoform 2." evidence="7">
    <original>EWAREELD</original>
    <variation>GNLLVRIS</variation>
    <location>
        <begin position="412"/>
        <end position="419"/>
    </location>
</feature>
<feature type="splice variant" id="VSP_014945" description="In isoform 2." evidence="7">
    <location>
        <begin position="420"/>
        <end position="704"/>
    </location>
</feature>
<feature type="sequence conflict" description="In Ref. 1; BAB29769." evidence="8" ref="1">
    <original>L</original>
    <variation>F</variation>
    <location>
        <position position="28"/>
    </location>
</feature>
<feature type="sequence conflict" description="In Ref. 1; BAB29769." evidence="8" ref="1">
    <original>A</original>
    <variation>V</variation>
    <location>
        <position position="110"/>
    </location>
</feature>
<protein>
    <recommendedName>
        <fullName>Lebercilin</fullName>
    </recommendedName>
    <alternativeName>
        <fullName>Leber congenital amaurosis 5 protein homolog</fullName>
    </alternativeName>
</protein>
<evidence type="ECO:0000250" key="1"/>
<evidence type="ECO:0000250" key="2">
    <source>
        <dbReference type="UniProtKB" id="Q86VQ0"/>
    </source>
</evidence>
<evidence type="ECO:0000255" key="3"/>
<evidence type="ECO:0000256" key="4">
    <source>
        <dbReference type="SAM" id="MobiDB-lite"/>
    </source>
</evidence>
<evidence type="ECO:0000269" key="5">
    <source>
    </source>
</evidence>
<evidence type="ECO:0000269" key="6">
    <source>
    </source>
</evidence>
<evidence type="ECO:0000303" key="7">
    <source>
    </source>
</evidence>
<evidence type="ECO:0000305" key="8"/>
<evidence type="ECO:0007744" key="9">
    <source>
    </source>
</evidence>
<name>LCA5_MOUSE</name>
<accession>Q80ST9</accession>
<accession>Q9CYM9</accession>
<accession>Q9D5J9</accession>
<reference key="1">
    <citation type="journal article" date="2005" name="Science">
        <title>The transcriptional landscape of the mammalian genome.</title>
        <authorList>
            <person name="Carninci P."/>
            <person name="Kasukawa T."/>
            <person name="Katayama S."/>
            <person name="Gough J."/>
            <person name="Frith M.C."/>
            <person name="Maeda N."/>
            <person name="Oyama R."/>
            <person name="Ravasi T."/>
            <person name="Lenhard B."/>
            <person name="Wells C."/>
            <person name="Kodzius R."/>
            <person name="Shimokawa K."/>
            <person name="Bajic V.B."/>
            <person name="Brenner S.E."/>
            <person name="Batalov S."/>
            <person name="Forrest A.R."/>
            <person name="Zavolan M."/>
            <person name="Davis M.J."/>
            <person name="Wilming L.G."/>
            <person name="Aidinis V."/>
            <person name="Allen J.E."/>
            <person name="Ambesi-Impiombato A."/>
            <person name="Apweiler R."/>
            <person name="Aturaliya R.N."/>
            <person name="Bailey T.L."/>
            <person name="Bansal M."/>
            <person name="Baxter L."/>
            <person name="Beisel K.W."/>
            <person name="Bersano T."/>
            <person name="Bono H."/>
            <person name="Chalk A.M."/>
            <person name="Chiu K.P."/>
            <person name="Choudhary V."/>
            <person name="Christoffels A."/>
            <person name="Clutterbuck D.R."/>
            <person name="Crowe M.L."/>
            <person name="Dalla E."/>
            <person name="Dalrymple B.P."/>
            <person name="de Bono B."/>
            <person name="Della Gatta G."/>
            <person name="di Bernardo D."/>
            <person name="Down T."/>
            <person name="Engstrom P."/>
            <person name="Fagiolini M."/>
            <person name="Faulkner G."/>
            <person name="Fletcher C.F."/>
            <person name="Fukushima T."/>
            <person name="Furuno M."/>
            <person name="Futaki S."/>
            <person name="Gariboldi M."/>
            <person name="Georgii-Hemming P."/>
            <person name="Gingeras T.R."/>
            <person name="Gojobori T."/>
            <person name="Green R.E."/>
            <person name="Gustincich S."/>
            <person name="Harbers M."/>
            <person name="Hayashi Y."/>
            <person name="Hensch T.K."/>
            <person name="Hirokawa N."/>
            <person name="Hill D."/>
            <person name="Huminiecki L."/>
            <person name="Iacono M."/>
            <person name="Ikeo K."/>
            <person name="Iwama A."/>
            <person name="Ishikawa T."/>
            <person name="Jakt M."/>
            <person name="Kanapin A."/>
            <person name="Katoh M."/>
            <person name="Kawasawa Y."/>
            <person name="Kelso J."/>
            <person name="Kitamura H."/>
            <person name="Kitano H."/>
            <person name="Kollias G."/>
            <person name="Krishnan S.P."/>
            <person name="Kruger A."/>
            <person name="Kummerfeld S.K."/>
            <person name="Kurochkin I.V."/>
            <person name="Lareau L.F."/>
            <person name="Lazarevic D."/>
            <person name="Lipovich L."/>
            <person name="Liu J."/>
            <person name="Liuni S."/>
            <person name="McWilliam S."/>
            <person name="Madan Babu M."/>
            <person name="Madera M."/>
            <person name="Marchionni L."/>
            <person name="Matsuda H."/>
            <person name="Matsuzawa S."/>
            <person name="Miki H."/>
            <person name="Mignone F."/>
            <person name="Miyake S."/>
            <person name="Morris K."/>
            <person name="Mottagui-Tabar S."/>
            <person name="Mulder N."/>
            <person name="Nakano N."/>
            <person name="Nakauchi H."/>
            <person name="Ng P."/>
            <person name="Nilsson R."/>
            <person name="Nishiguchi S."/>
            <person name="Nishikawa S."/>
            <person name="Nori F."/>
            <person name="Ohara O."/>
            <person name="Okazaki Y."/>
            <person name="Orlando V."/>
            <person name="Pang K.C."/>
            <person name="Pavan W.J."/>
            <person name="Pavesi G."/>
            <person name="Pesole G."/>
            <person name="Petrovsky N."/>
            <person name="Piazza S."/>
            <person name="Reed J."/>
            <person name="Reid J.F."/>
            <person name="Ring B.Z."/>
            <person name="Ringwald M."/>
            <person name="Rost B."/>
            <person name="Ruan Y."/>
            <person name="Salzberg S.L."/>
            <person name="Sandelin A."/>
            <person name="Schneider C."/>
            <person name="Schoenbach C."/>
            <person name="Sekiguchi K."/>
            <person name="Semple C.A."/>
            <person name="Seno S."/>
            <person name="Sessa L."/>
            <person name="Sheng Y."/>
            <person name="Shibata Y."/>
            <person name="Shimada H."/>
            <person name="Shimada K."/>
            <person name="Silva D."/>
            <person name="Sinclair B."/>
            <person name="Sperling S."/>
            <person name="Stupka E."/>
            <person name="Sugiura K."/>
            <person name="Sultana R."/>
            <person name="Takenaka Y."/>
            <person name="Taki K."/>
            <person name="Tammoja K."/>
            <person name="Tan S.L."/>
            <person name="Tang S."/>
            <person name="Taylor M.S."/>
            <person name="Tegner J."/>
            <person name="Teichmann S.A."/>
            <person name="Ueda H.R."/>
            <person name="van Nimwegen E."/>
            <person name="Verardo R."/>
            <person name="Wei C.L."/>
            <person name="Yagi K."/>
            <person name="Yamanishi H."/>
            <person name="Zabarovsky E."/>
            <person name="Zhu S."/>
            <person name="Zimmer A."/>
            <person name="Hide W."/>
            <person name="Bult C."/>
            <person name="Grimmond S.M."/>
            <person name="Teasdale R.D."/>
            <person name="Liu E.T."/>
            <person name="Brusic V."/>
            <person name="Quackenbush J."/>
            <person name="Wahlestedt C."/>
            <person name="Mattick J.S."/>
            <person name="Hume D.A."/>
            <person name="Kai C."/>
            <person name="Sasaki D."/>
            <person name="Tomaru Y."/>
            <person name="Fukuda S."/>
            <person name="Kanamori-Katayama M."/>
            <person name="Suzuki M."/>
            <person name="Aoki J."/>
            <person name="Arakawa T."/>
            <person name="Iida J."/>
            <person name="Imamura K."/>
            <person name="Itoh M."/>
            <person name="Kato T."/>
            <person name="Kawaji H."/>
            <person name="Kawagashira N."/>
            <person name="Kawashima T."/>
            <person name="Kojima M."/>
            <person name="Kondo S."/>
            <person name="Konno H."/>
            <person name="Nakano K."/>
            <person name="Ninomiya N."/>
            <person name="Nishio T."/>
            <person name="Okada M."/>
            <person name="Plessy C."/>
            <person name="Shibata K."/>
            <person name="Shiraki T."/>
            <person name="Suzuki S."/>
            <person name="Tagami M."/>
            <person name="Waki K."/>
            <person name="Watahiki A."/>
            <person name="Okamura-Oho Y."/>
            <person name="Suzuki H."/>
            <person name="Kawai J."/>
            <person name="Hayashizaki Y."/>
        </authorList>
    </citation>
    <scope>NUCLEOTIDE SEQUENCE [LARGE SCALE MRNA] (ISOFORMS 1 AND 2)</scope>
    <source>
        <strain>C57BL/6J</strain>
        <tissue>Testis</tissue>
    </source>
</reference>
<reference key="2">
    <citation type="journal article" date="2004" name="Genome Res.">
        <title>The status, quality, and expansion of the NIH full-length cDNA project: the Mammalian Gene Collection (MGC).</title>
        <authorList>
            <consortium name="The MGC Project Team"/>
        </authorList>
    </citation>
    <scope>NUCLEOTIDE SEQUENCE [LARGE SCALE MRNA] (ISOFORM 1)</scope>
    <source>
        <strain>C57BL/6J</strain>
        <tissue>Brain</tissue>
    </source>
</reference>
<reference key="3">
    <citation type="journal article" date="2007" name="Nat. Genet.">
        <title>Mutations in LCA5, encoding the ciliary protein lebercilin, cause Leber congenital amaurosis.</title>
        <authorList>
            <person name="den Hollander A.I."/>
            <person name="Koenekoop R.K."/>
            <person name="Mohamed M.D."/>
            <person name="Arts H.H."/>
            <person name="Boldt K."/>
            <person name="Towns K.V."/>
            <person name="Sedmak T."/>
            <person name="Beer M."/>
            <person name="Nagel-Wolfrum K."/>
            <person name="McKibbin M."/>
            <person name="Dharmaraj S."/>
            <person name="Lopez I."/>
            <person name="Ivings L."/>
            <person name="Williams G.A."/>
            <person name="Springell K."/>
            <person name="Woods C.G."/>
            <person name="Jafri H."/>
            <person name="Rashid Y."/>
            <person name="Strom T.M."/>
            <person name="van der Zwaag B."/>
            <person name="Gosens I."/>
            <person name="Kersten F.F.J."/>
            <person name="van Wijk E."/>
            <person name="Veltman J.A."/>
            <person name="Zonneveld M.N."/>
            <person name="van Beersum S.E.C."/>
            <person name="Maumenee I.H."/>
            <person name="Wolfrum U."/>
            <person name="Cheetham M.E."/>
            <person name="Ueffing M."/>
            <person name="Cremers F.P.M."/>
            <person name="Inglehearn C.F."/>
            <person name="Roepman R."/>
        </authorList>
    </citation>
    <scope>TISSUE SPECIFICITY</scope>
    <scope>DEVELOPMENTAL STAGE</scope>
    <scope>SUBCELLULAR LOCATION</scope>
</reference>
<reference key="4">
    <citation type="journal article" date="2010" name="Cell">
        <title>A tissue-specific atlas of mouse protein phosphorylation and expression.</title>
        <authorList>
            <person name="Huttlin E.L."/>
            <person name="Jedrychowski M.P."/>
            <person name="Elias J.E."/>
            <person name="Goswami T."/>
            <person name="Rad R."/>
            <person name="Beausoleil S.A."/>
            <person name="Villen J."/>
            <person name="Haas W."/>
            <person name="Sowa M.E."/>
            <person name="Gygi S.P."/>
        </authorList>
    </citation>
    <scope>PHOSPHORYLATION [LARGE SCALE ANALYSIS] AT SER-7</scope>
    <scope>IDENTIFICATION BY MASS SPECTROMETRY [LARGE SCALE ANALYSIS]</scope>
    <source>
        <tissue>Testis</tissue>
    </source>
</reference>
<reference key="5">
    <citation type="journal article" date="2011" name="J. Clin. Invest.">
        <title>Disruption of intraflagellar protein transport in photoreceptor cilia causes Leber congenital amaurosis in humans and mice.</title>
        <authorList>
            <person name="Boldt K."/>
            <person name="Mans D.A."/>
            <person name="Won J."/>
            <person name="van Reeuwijk J."/>
            <person name="Vogt A."/>
            <person name="Kinkl N."/>
            <person name="Letteboer S.J."/>
            <person name="Hicks W.L."/>
            <person name="Hurd R.E."/>
            <person name="Naggert J.K."/>
            <person name="Texier Y."/>
            <person name="den Hollander A.I."/>
            <person name="Koenekoop R.K."/>
            <person name="Bennett J."/>
            <person name="Cremers F.P."/>
            <person name="Gloeckner C.J."/>
            <person name="Nishina P.M."/>
            <person name="Roepman R."/>
            <person name="Ueffing M."/>
        </authorList>
    </citation>
    <scope>SUBCELLULAR LOCATION</scope>
    <scope>DISRUPTION PHENOTYPE</scope>
    <scope>FUNCTION</scope>
</reference>
<organism>
    <name type="scientific">Mus musculus</name>
    <name type="common">Mouse</name>
    <dbReference type="NCBI Taxonomy" id="10090"/>
    <lineage>
        <taxon>Eukaryota</taxon>
        <taxon>Metazoa</taxon>
        <taxon>Chordata</taxon>
        <taxon>Craniata</taxon>
        <taxon>Vertebrata</taxon>
        <taxon>Euteleostomi</taxon>
        <taxon>Mammalia</taxon>
        <taxon>Eutheria</taxon>
        <taxon>Euarchontoglires</taxon>
        <taxon>Glires</taxon>
        <taxon>Rodentia</taxon>
        <taxon>Myomorpha</taxon>
        <taxon>Muroidea</taxon>
        <taxon>Muridae</taxon>
        <taxon>Murinae</taxon>
        <taxon>Mus</taxon>
        <taxon>Mus</taxon>
    </lineage>
</organism>